<feature type="chain" id="PRO_0000096200" description="Thiamine-monophosphate kinase">
    <location>
        <begin position="1"/>
        <end position="296"/>
    </location>
</feature>
<feature type="binding site" evidence="1">
    <location>
        <position position="32"/>
    </location>
    <ligand>
        <name>Mg(2+)</name>
        <dbReference type="ChEBI" id="CHEBI:18420"/>
        <label>3</label>
    </ligand>
</feature>
<feature type="binding site" evidence="1">
    <location>
        <position position="32"/>
    </location>
    <ligand>
        <name>Mg(2+)</name>
        <dbReference type="ChEBI" id="CHEBI:18420"/>
        <label>4</label>
    </ligand>
</feature>
<feature type="binding site" evidence="1">
    <location>
        <position position="46"/>
    </location>
    <ligand>
        <name>Mg(2+)</name>
        <dbReference type="ChEBI" id="CHEBI:18420"/>
        <label>4</label>
    </ligand>
</feature>
<feature type="binding site" evidence="1">
    <location>
        <position position="48"/>
    </location>
    <ligand>
        <name>Mg(2+)</name>
        <dbReference type="ChEBI" id="CHEBI:18420"/>
        <label>1</label>
    </ligand>
</feature>
<feature type="binding site" evidence="1">
    <location>
        <position position="48"/>
    </location>
    <ligand>
        <name>Mg(2+)</name>
        <dbReference type="ChEBI" id="CHEBI:18420"/>
        <label>2</label>
    </ligand>
</feature>
<feature type="binding site" evidence="1">
    <location>
        <position position="55"/>
    </location>
    <ligand>
        <name>substrate</name>
    </ligand>
</feature>
<feature type="binding site" evidence="1">
    <location>
        <position position="76"/>
    </location>
    <ligand>
        <name>Mg(2+)</name>
        <dbReference type="ChEBI" id="CHEBI:18420"/>
        <label>2</label>
    </ligand>
</feature>
<feature type="binding site" evidence="1">
    <location>
        <position position="76"/>
    </location>
    <ligand>
        <name>Mg(2+)</name>
        <dbReference type="ChEBI" id="CHEBI:18420"/>
        <label>3</label>
    </ligand>
</feature>
<feature type="binding site" evidence="1">
    <location>
        <position position="76"/>
    </location>
    <ligand>
        <name>Mg(2+)</name>
        <dbReference type="ChEBI" id="CHEBI:18420"/>
        <label>4</label>
    </ligand>
</feature>
<feature type="binding site" evidence="1">
    <location>
        <begin position="120"/>
        <end position="121"/>
    </location>
    <ligand>
        <name>ATP</name>
        <dbReference type="ChEBI" id="CHEBI:30616"/>
    </ligand>
</feature>
<feature type="binding site" evidence="1">
    <location>
        <position position="121"/>
    </location>
    <ligand>
        <name>Mg(2+)</name>
        <dbReference type="ChEBI" id="CHEBI:18420"/>
        <label>1</label>
    </ligand>
</feature>
<feature type="binding site" evidence="1">
    <location>
        <position position="144"/>
    </location>
    <ligand>
        <name>ATP</name>
        <dbReference type="ChEBI" id="CHEBI:30616"/>
    </ligand>
</feature>
<feature type="binding site" evidence="1">
    <location>
        <position position="206"/>
    </location>
    <ligand>
        <name>Mg(2+)</name>
        <dbReference type="ChEBI" id="CHEBI:18420"/>
        <label>3</label>
    </ligand>
</feature>
<feature type="binding site" evidence="1">
    <location>
        <position position="208"/>
    </location>
    <ligand>
        <name>ATP</name>
        <dbReference type="ChEBI" id="CHEBI:30616"/>
    </ligand>
</feature>
<feature type="binding site" evidence="1">
    <location>
        <position position="209"/>
    </location>
    <ligand>
        <name>Mg(2+)</name>
        <dbReference type="ChEBI" id="CHEBI:18420"/>
        <label>5</label>
    </ligand>
</feature>
<feature type="binding site" evidence="1">
    <location>
        <position position="293"/>
    </location>
    <ligand>
        <name>substrate</name>
    </ligand>
</feature>
<gene>
    <name evidence="1" type="primary">thiL</name>
    <name type="ordered locus">AF_0733</name>
</gene>
<reference key="1">
    <citation type="journal article" date="1997" name="Nature">
        <title>The complete genome sequence of the hyperthermophilic, sulphate-reducing archaeon Archaeoglobus fulgidus.</title>
        <authorList>
            <person name="Klenk H.-P."/>
            <person name="Clayton R.A."/>
            <person name="Tomb J.-F."/>
            <person name="White O."/>
            <person name="Nelson K.E."/>
            <person name="Ketchum K.A."/>
            <person name="Dodson R.J."/>
            <person name="Gwinn M.L."/>
            <person name="Hickey E.K."/>
            <person name="Peterson J.D."/>
            <person name="Richardson D.L."/>
            <person name="Kerlavage A.R."/>
            <person name="Graham D.E."/>
            <person name="Kyrpides N.C."/>
            <person name="Fleischmann R.D."/>
            <person name="Quackenbush J."/>
            <person name="Lee N.H."/>
            <person name="Sutton G.G."/>
            <person name="Gill S.R."/>
            <person name="Kirkness E.F."/>
            <person name="Dougherty B.A."/>
            <person name="McKenney K."/>
            <person name="Adams M.D."/>
            <person name="Loftus B.J."/>
            <person name="Peterson S.N."/>
            <person name="Reich C.I."/>
            <person name="McNeil L.K."/>
            <person name="Badger J.H."/>
            <person name="Glodek A."/>
            <person name="Zhou L."/>
            <person name="Overbeek R."/>
            <person name="Gocayne J.D."/>
            <person name="Weidman J.F."/>
            <person name="McDonald L.A."/>
            <person name="Utterback T.R."/>
            <person name="Cotton M.D."/>
            <person name="Spriggs T."/>
            <person name="Artiach P."/>
            <person name="Kaine B.P."/>
            <person name="Sykes S.M."/>
            <person name="Sadow P.W."/>
            <person name="D'Andrea K.P."/>
            <person name="Bowman C."/>
            <person name="Fujii C."/>
            <person name="Garland S.A."/>
            <person name="Mason T.M."/>
            <person name="Olsen G.J."/>
            <person name="Fraser C.M."/>
            <person name="Smith H.O."/>
            <person name="Woese C.R."/>
            <person name="Venter J.C."/>
        </authorList>
    </citation>
    <scope>NUCLEOTIDE SEQUENCE [LARGE SCALE GENOMIC DNA]</scope>
    <source>
        <strain>ATCC 49558 / DSM 4304 / JCM 9628 / NBRC 100126 / VC-16</strain>
    </source>
</reference>
<evidence type="ECO:0000255" key="1">
    <source>
        <dbReference type="HAMAP-Rule" id="MF_02128"/>
    </source>
</evidence>
<protein>
    <recommendedName>
        <fullName evidence="1">Thiamine-monophosphate kinase</fullName>
        <shortName evidence="1">TMP kinase</shortName>
        <shortName evidence="1">Thiamine-phosphate kinase</shortName>
        <ecNumber evidence="1">2.7.4.16</ecNumber>
    </recommendedName>
</protein>
<comment type="function">
    <text evidence="1">Catalyzes the ATP-dependent phosphorylation of thiamine-monophosphate (TMP) to form thiamine-pyrophosphate (TPP), the active form of vitamin B1.</text>
</comment>
<comment type="catalytic activity">
    <reaction evidence="1">
        <text>thiamine phosphate + ATP = thiamine diphosphate + ADP</text>
        <dbReference type="Rhea" id="RHEA:15913"/>
        <dbReference type="ChEBI" id="CHEBI:30616"/>
        <dbReference type="ChEBI" id="CHEBI:37575"/>
        <dbReference type="ChEBI" id="CHEBI:58937"/>
        <dbReference type="ChEBI" id="CHEBI:456216"/>
        <dbReference type="EC" id="2.7.4.16"/>
    </reaction>
</comment>
<comment type="pathway">
    <text evidence="1">Cofactor biosynthesis; thiamine diphosphate biosynthesis; thiamine diphosphate from thiamine phosphate: step 1/1.</text>
</comment>
<comment type="miscellaneous">
    <text evidence="1">Reaction mechanism of ThiL seems to utilize a direct, inline transfer of the gamma-phosphate of ATP to TMP rather than a phosphorylated enzyme intermediate.</text>
</comment>
<comment type="similarity">
    <text evidence="1">Belongs to the thiamine-monophosphate kinase family.</text>
</comment>
<dbReference type="EC" id="2.7.4.16" evidence="1"/>
<dbReference type="EMBL" id="AE000782">
    <property type="protein sequence ID" value="AAB90505.1"/>
    <property type="molecule type" value="Genomic_DNA"/>
</dbReference>
<dbReference type="PIR" id="E69341">
    <property type="entry name" value="E69341"/>
</dbReference>
<dbReference type="SMR" id="O29525"/>
<dbReference type="STRING" id="224325.AF_0733"/>
<dbReference type="PaxDb" id="224325-AF_0733"/>
<dbReference type="EnsemblBacteria" id="AAB90505">
    <property type="protein sequence ID" value="AAB90505"/>
    <property type="gene ID" value="AF_0733"/>
</dbReference>
<dbReference type="KEGG" id="afu:AF_0733"/>
<dbReference type="eggNOG" id="arCOG00638">
    <property type="taxonomic scope" value="Archaea"/>
</dbReference>
<dbReference type="HOGENOM" id="CLU_046964_2_0_2"/>
<dbReference type="PhylomeDB" id="O29525"/>
<dbReference type="UniPathway" id="UPA00060">
    <property type="reaction ID" value="UER00142"/>
</dbReference>
<dbReference type="Proteomes" id="UP000002199">
    <property type="component" value="Chromosome"/>
</dbReference>
<dbReference type="GO" id="GO:0005524">
    <property type="term" value="F:ATP binding"/>
    <property type="evidence" value="ECO:0007669"/>
    <property type="project" value="UniProtKB-UniRule"/>
</dbReference>
<dbReference type="GO" id="GO:0000287">
    <property type="term" value="F:magnesium ion binding"/>
    <property type="evidence" value="ECO:0007669"/>
    <property type="project" value="UniProtKB-UniRule"/>
</dbReference>
<dbReference type="GO" id="GO:0009030">
    <property type="term" value="F:thiamine-phosphate kinase activity"/>
    <property type="evidence" value="ECO:0007669"/>
    <property type="project" value="UniProtKB-UniRule"/>
</dbReference>
<dbReference type="GO" id="GO:0009228">
    <property type="term" value="P:thiamine biosynthetic process"/>
    <property type="evidence" value="ECO:0007669"/>
    <property type="project" value="UniProtKB-KW"/>
</dbReference>
<dbReference type="GO" id="GO:0009229">
    <property type="term" value="P:thiamine diphosphate biosynthetic process"/>
    <property type="evidence" value="ECO:0007669"/>
    <property type="project" value="UniProtKB-UniRule"/>
</dbReference>
<dbReference type="CDD" id="cd02194">
    <property type="entry name" value="ThiL"/>
    <property type="match status" value="1"/>
</dbReference>
<dbReference type="Gene3D" id="3.90.650.10">
    <property type="entry name" value="PurM-like C-terminal domain"/>
    <property type="match status" value="1"/>
</dbReference>
<dbReference type="Gene3D" id="3.30.1330.10">
    <property type="entry name" value="PurM-like, N-terminal domain"/>
    <property type="match status" value="1"/>
</dbReference>
<dbReference type="HAMAP" id="MF_02128">
    <property type="entry name" value="TMP_kinase"/>
    <property type="match status" value="1"/>
</dbReference>
<dbReference type="InterPro" id="IPR036676">
    <property type="entry name" value="PurM-like_C_sf"/>
</dbReference>
<dbReference type="InterPro" id="IPR016188">
    <property type="entry name" value="PurM-like_N"/>
</dbReference>
<dbReference type="InterPro" id="IPR036921">
    <property type="entry name" value="PurM-like_N_sf"/>
</dbReference>
<dbReference type="InterPro" id="IPR006283">
    <property type="entry name" value="ThiL-like"/>
</dbReference>
<dbReference type="NCBIfam" id="TIGR01379">
    <property type="entry name" value="thiL"/>
    <property type="match status" value="1"/>
</dbReference>
<dbReference type="PANTHER" id="PTHR30270">
    <property type="entry name" value="THIAMINE-MONOPHOSPHATE KINASE"/>
    <property type="match status" value="1"/>
</dbReference>
<dbReference type="PANTHER" id="PTHR30270:SF3">
    <property type="entry name" value="THIAMINE-MONOPHOSPHATE KINASE"/>
    <property type="match status" value="1"/>
</dbReference>
<dbReference type="Pfam" id="PF00586">
    <property type="entry name" value="AIRS"/>
    <property type="match status" value="1"/>
</dbReference>
<dbReference type="PIRSF" id="PIRSF005303">
    <property type="entry name" value="Thiam_monoph_kin"/>
    <property type="match status" value="1"/>
</dbReference>
<dbReference type="SUPFAM" id="SSF56042">
    <property type="entry name" value="PurM C-terminal domain-like"/>
    <property type="match status" value="1"/>
</dbReference>
<dbReference type="SUPFAM" id="SSF55326">
    <property type="entry name" value="PurM N-terminal domain-like"/>
    <property type="match status" value="1"/>
</dbReference>
<proteinExistence type="inferred from homology"/>
<name>THIL_ARCFU</name>
<organism>
    <name type="scientific">Archaeoglobus fulgidus (strain ATCC 49558 / DSM 4304 / JCM 9628 / NBRC 100126 / VC-16)</name>
    <dbReference type="NCBI Taxonomy" id="224325"/>
    <lineage>
        <taxon>Archaea</taxon>
        <taxon>Methanobacteriati</taxon>
        <taxon>Methanobacteriota</taxon>
        <taxon>Archaeoglobi</taxon>
        <taxon>Archaeoglobales</taxon>
        <taxon>Archaeoglobaceae</taxon>
        <taxon>Archaeoglobus</taxon>
    </lineage>
</organism>
<keyword id="KW-0067">ATP-binding</keyword>
<keyword id="KW-0418">Kinase</keyword>
<keyword id="KW-0460">Magnesium</keyword>
<keyword id="KW-0479">Metal-binding</keyword>
<keyword id="KW-0547">Nucleotide-binding</keyword>
<keyword id="KW-1185">Reference proteome</keyword>
<keyword id="KW-0784">Thiamine biosynthesis</keyword>
<keyword id="KW-0808">Transferase</keyword>
<accession>O29525</accession>
<sequence>MFYANMKEFELIKLVERLFGDEDVITPAGKHDAAYVKIGNRLIVLTCDTVNEKSDFPPYMLPEEMGWMAIAVTLSDVAACGARPLYFLSSISLKSIEFFEDILLGIKRCADRFGVKVVGGDIDFSEITTIAGFAIGEARRHITRRGAKVGEGVFITDLPGKAQLCLEMLERGAKREELPYAEKLYTPVPRIEEGMRIARYASAMTDVSDSLAVSLHQISQSSNVKIVLDNIVLSHLSPAENALELFLYGGGDFELVYTAKSSDDGIRIGRVERGKGVFAEIDGKTFEVEFRGYSHF</sequence>